<reference key="1">
    <citation type="journal article" date="1995" name="Mol. Cell. Endocrinol.">
        <title>Identification and expression of the Drosophila adipokinetic hormone gene.</title>
        <authorList>
            <person name="Noyes B.E."/>
            <person name="Schaffer M.H."/>
        </authorList>
    </citation>
    <scope>NUCLEOTIDE SEQUENCE [GENOMIC DNA]</scope>
</reference>
<reference key="2">
    <citation type="journal article" date="2000" name="Science">
        <title>The genome sequence of Drosophila melanogaster.</title>
        <authorList>
            <person name="Adams M.D."/>
            <person name="Celniker S.E."/>
            <person name="Holt R.A."/>
            <person name="Evans C.A."/>
            <person name="Gocayne J.D."/>
            <person name="Amanatides P.G."/>
            <person name="Scherer S.E."/>
            <person name="Li P.W."/>
            <person name="Hoskins R.A."/>
            <person name="Galle R.F."/>
            <person name="George R.A."/>
            <person name="Lewis S.E."/>
            <person name="Richards S."/>
            <person name="Ashburner M."/>
            <person name="Henderson S.N."/>
            <person name="Sutton G.G."/>
            <person name="Wortman J.R."/>
            <person name="Yandell M.D."/>
            <person name="Zhang Q."/>
            <person name="Chen L.X."/>
            <person name="Brandon R.C."/>
            <person name="Rogers Y.-H.C."/>
            <person name="Blazej R.G."/>
            <person name="Champe M."/>
            <person name="Pfeiffer B.D."/>
            <person name="Wan K.H."/>
            <person name="Doyle C."/>
            <person name="Baxter E.G."/>
            <person name="Helt G."/>
            <person name="Nelson C.R."/>
            <person name="Miklos G.L.G."/>
            <person name="Abril J.F."/>
            <person name="Agbayani A."/>
            <person name="An H.-J."/>
            <person name="Andrews-Pfannkoch C."/>
            <person name="Baldwin D."/>
            <person name="Ballew R.M."/>
            <person name="Basu A."/>
            <person name="Baxendale J."/>
            <person name="Bayraktaroglu L."/>
            <person name="Beasley E.M."/>
            <person name="Beeson K.Y."/>
            <person name="Benos P.V."/>
            <person name="Berman B.P."/>
            <person name="Bhandari D."/>
            <person name="Bolshakov S."/>
            <person name="Borkova D."/>
            <person name="Botchan M.R."/>
            <person name="Bouck J."/>
            <person name="Brokstein P."/>
            <person name="Brottier P."/>
            <person name="Burtis K.C."/>
            <person name="Busam D.A."/>
            <person name="Butler H."/>
            <person name="Cadieu E."/>
            <person name="Center A."/>
            <person name="Chandra I."/>
            <person name="Cherry J.M."/>
            <person name="Cawley S."/>
            <person name="Dahlke C."/>
            <person name="Davenport L.B."/>
            <person name="Davies P."/>
            <person name="de Pablos B."/>
            <person name="Delcher A."/>
            <person name="Deng Z."/>
            <person name="Mays A.D."/>
            <person name="Dew I."/>
            <person name="Dietz S.M."/>
            <person name="Dodson K."/>
            <person name="Doup L.E."/>
            <person name="Downes M."/>
            <person name="Dugan-Rocha S."/>
            <person name="Dunkov B.C."/>
            <person name="Dunn P."/>
            <person name="Durbin K.J."/>
            <person name="Evangelista C.C."/>
            <person name="Ferraz C."/>
            <person name="Ferriera S."/>
            <person name="Fleischmann W."/>
            <person name="Fosler C."/>
            <person name="Gabrielian A.E."/>
            <person name="Garg N.S."/>
            <person name="Gelbart W.M."/>
            <person name="Glasser K."/>
            <person name="Glodek A."/>
            <person name="Gong F."/>
            <person name="Gorrell J.H."/>
            <person name="Gu Z."/>
            <person name="Guan P."/>
            <person name="Harris M."/>
            <person name="Harris N.L."/>
            <person name="Harvey D.A."/>
            <person name="Heiman T.J."/>
            <person name="Hernandez J.R."/>
            <person name="Houck J."/>
            <person name="Hostin D."/>
            <person name="Houston K.A."/>
            <person name="Howland T.J."/>
            <person name="Wei M.-H."/>
            <person name="Ibegwam C."/>
            <person name="Jalali M."/>
            <person name="Kalush F."/>
            <person name="Karpen G.H."/>
            <person name="Ke Z."/>
            <person name="Kennison J.A."/>
            <person name="Ketchum K.A."/>
            <person name="Kimmel B.E."/>
            <person name="Kodira C.D."/>
            <person name="Kraft C.L."/>
            <person name="Kravitz S."/>
            <person name="Kulp D."/>
            <person name="Lai Z."/>
            <person name="Lasko P."/>
            <person name="Lei Y."/>
            <person name="Levitsky A.A."/>
            <person name="Li J.H."/>
            <person name="Li Z."/>
            <person name="Liang Y."/>
            <person name="Lin X."/>
            <person name="Liu X."/>
            <person name="Mattei B."/>
            <person name="McIntosh T.C."/>
            <person name="McLeod M.P."/>
            <person name="McPherson D."/>
            <person name="Merkulov G."/>
            <person name="Milshina N.V."/>
            <person name="Mobarry C."/>
            <person name="Morris J."/>
            <person name="Moshrefi A."/>
            <person name="Mount S.M."/>
            <person name="Moy M."/>
            <person name="Murphy B."/>
            <person name="Murphy L."/>
            <person name="Muzny D.M."/>
            <person name="Nelson D.L."/>
            <person name="Nelson D.R."/>
            <person name="Nelson K.A."/>
            <person name="Nixon K."/>
            <person name="Nusskern D.R."/>
            <person name="Pacleb J.M."/>
            <person name="Palazzolo M."/>
            <person name="Pittman G.S."/>
            <person name="Pan S."/>
            <person name="Pollard J."/>
            <person name="Puri V."/>
            <person name="Reese M.G."/>
            <person name="Reinert K."/>
            <person name="Remington K."/>
            <person name="Saunders R.D.C."/>
            <person name="Scheeler F."/>
            <person name="Shen H."/>
            <person name="Shue B.C."/>
            <person name="Siden-Kiamos I."/>
            <person name="Simpson M."/>
            <person name="Skupski M.P."/>
            <person name="Smith T.J."/>
            <person name="Spier E."/>
            <person name="Spradling A.C."/>
            <person name="Stapleton M."/>
            <person name="Strong R."/>
            <person name="Sun E."/>
            <person name="Svirskas R."/>
            <person name="Tector C."/>
            <person name="Turner R."/>
            <person name="Venter E."/>
            <person name="Wang A.H."/>
            <person name="Wang X."/>
            <person name="Wang Z.-Y."/>
            <person name="Wassarman D.A."/>
            <person name="Weinstock G.M."/>
            <person name="Weissenbach J."/>
            <person name="Williams S.M."/>
            <person name="Woodage T."/>
            <person name="Worley K.C."/>
            <person name="Wu D."/>
            <person name="Yang S."/>
            <person name="Yao Q.A."/>
            <person name="Ye J."/>
            <person name="Yeh R.-F."/>
            <person name="Zaveri J.S."/>
            <person name="Zhan M."/>
            <person name="Zhang G."/>
            <person name="Zhao Q."/>
            <person name="Zheng L."/>
            <person name="Zheng X.H."/>
            <person name="Zhong F.N."/>
            <person name="Zhong W."/>
            <person name="Zhou X."/>
            <person name="Zhu S.C."/>
            <person name="Zhu X."/>
            <person name="Smith H.O."/>
            <person name="Gibbs R.A."/>
            <person name="Myers E.W."/>
            <person name="Rubin G.M."/>
            <person name="Venter J.C."/>
        </authorList>
    </citation>
    <scope>NUCLEOTIDE SEQUENCE [LARGE SCALE GENOMIC DNA]</scope>
    <source>
        <strain>Berkeley</strain>
    </source>
</reference>
<reference key="3">
    <citation type="journal article" date="2002" name="Genome Biol.">
        <title>Annotation of the Drosophila melanogaster euchromatic genome: a systematic review.</title>
        <authorList>
            <person name="Misra S."/>
            <person name="Crosby M.A."/>
            <person name="Mungall C.J."/>
            <person name="Matthews B.B."/>
            <person name="Campbell K.S."/>
            <person name="Hradecky P."/>
            <person name="Huang Y."/>
            <person name="Kaminker J.S."/>
            <person name="Millburn G.H."/>
            <person name="Prochnik S.E."/>
            <person name="Smith C.D."/>
            <person name="Tupy J.L."/>
            <person name="Whitfield E.J."/>
            <person name="Bayraktaroglu L."/>
            <person name="Berman B.P."/>
            <person name="Bettencourt B.R."/>
            <person name="Celniker S.E."/>
            <person name="de Grey A.D.N.J."/>
            <person name="Drysdale R.A."/>
            <person name="Harris N.L."/>
            <person name="Richter J."/>
            <person name="Russo S."/>
            <person name="Schroeder A.J."/>
            <person name="Shu S.Q."/>
            <person name="Stapleton M."/>
            <person name="Yamada C."/>
            <person name="Ashburner M."/>
            <person name="Gelbart W.M."/>
            <person name="Rubin G.M."/>
            <person name="Lewis S.E."/>
        </authorList>
    </citation>
    <scope>GENOME REANNOTATION</scope>
    <source>
        <strain>Berkeley</strain>
    </source>
</reference>
<reference key="4">
    <citation type="journal article" date="1990" name="Biochem. J.">
        <title>The fruitfly Drosophila melanogaster contains a novel charged adipokinetic-hormone-family peptide.</title>
        <authorList>
            <person name="Schaffer M.H."/>
            <person name="Noyes B.E."/>
            <person name="Slaughter C.A."/>
            <person name="Thorne G.C."/>
            <person name="Gaskell S.J."/>
        </authorList>
    </citation>
    <scope>PROTEIN SEQUENCE OF 23-30</scope>
    <scope>PYROGLUTAMATE FORMATION AT GLN-23</scope>
    <scope>AMIDATION AT TRP-30</scope>
    <source>
        <strain>Oregon-R</strain>
        <tissue>Thorax</tissue>
    </source>
</reference>
<reference key="5">
    <citation type="journal article" date="2002" name="J. Biol. Chem.">
        <title>Peptidomics of the larval Drosophila melanogaster central nervous system.</title>
        <authorList>
            <person name="Baggerman G."/>
            <person name="Cerstiaens A."/>
            <person name="De Loof A."/>
            <person name="Schoofs L."/>
        </authorList>
    </citation>
    <scope>PROTEIN SEQUENCE OF 23-30</scope>
    <scope>AMIDATION AT TRP-30</scope>
    <source>
        <tissue>Larva</tissue>
    </source>
</reference>
<accession>P61855</accession>
<accession>P17975</accession>
<accession>Q9VZH6</accession>
<comment type="function">
    <text>Probably causes a marked increase in hemolymph carbohydrate.</text>
</comment>
<comment type="subcellular location">
    <subcellularLocation>
        <location>Secreted</location>
    </subcellularLocation>
</comment>
<comment type="similarity">
    <text evidence="3">Belongs to the AKH/HRTH/RPCH family.</text>
</comment>
<protein>
    <recommendedName>
        <fullName>Adipokinetic hormone</fullName>
    </recommendedName>
    <alternativeName>
        <fullName>Hypertrehalosaemic hormone</fullName>
        <shortName>HRTH</shortName>
    </alternativeName>
    <alternativeName>
        <fullName>dAKH</fullName>
    </alternativeName>
</protein>
<organism>
    <name type="scientific">Drosophila melanogaster</name>
    <name type="common">Fruit fly</name>
    <dbReference type="NCBI Taxonomy" id="7227"/>
    <lineage>
        <taxon>Eukaryota</taxon>
        <taxon>Metazoa</taxon>
        <taxon>Ecdysozoa</taxon>
        <taxon>Arthropoda</taxon>
        <taxon>Hexapoda</taxon>
        <taxon>Insecta</taxon>
        <taxon>Pterygota</taxon>
        <taxon>Neoptera</taxon>
        <taxon>Endopterygota</taxon>
        <taxon>Diptera</taxon>
        <taxon>Brachycera</taxon>
        <taxon>Muscomorpha</taxon>
        <taxon>Ephydroidea</taxon>
        <taxon>Drosophilidae</taxon>
        <taxon>Drosophila</taxon>
        <taxon>Sophophora</taxon>
    </lineage>
</organism>
<evidence type="ECO:0000269" key="1">
    <source>
    </source>
</evidence>
<evidence type="ECO:0000269" key="2">
    <source>
    </source>
</evidence>
<evidence type="ECO:0000305" key="3"/>
<sequence length="79" mass="8843">MNPKSEVLIAAVLFMLLACVQCQLTFSPDWGKRSVGGAGPGTFFETQQGNCKTSNEMLLEIFRFVQSQAQLFLDCKHRE</sequence>
<name>AKH_DROME</name>
<gene>
    <name type="primary">Akh</name>
    <name type="ORF">CG1171</name>
</gene>
<proteinExistence type="evidence at protein level"/>
<feature type="signal peptide" evidence="1 2">
    <location>
        <begin position="1"/>
        <end position="22"/>
    </location>
</feature>
<feature type="peptide" id="PRO_0000000932" description="Adipokinetic hormone">
    <location>
        <begin position="23"/>
        <end position="30"/>
    </location>
</feature>
<feature type="propeptide" id="PRO_0000000933">
    <location>
        <begin position="34"/>
        <end position="79"/>
    </location>
</feature>
<feature type="modified residue" description="Pyrrolidone carboxylic acid" evidence="2">
    <location>
        <position position="23"/>
    </location>
</feature>
<feature type="modified residue" description="Tryptophan amide" evidence="1 2">
    <location>
        <position position="30"/>
    </location>
</feature>
<dbReference type="EMBL" id="L23764">
    <property type="protein sequence ID" value="AAB00099.1"/>
    <property type="molecule type" value="Genomic_DNA"/>
</dbReference>
<dbReference type="EMBL" id="AE014296">
    <property type="protein sequence ID" value="AAF47846.1"/>
    <property type="molecule type" value="Genomic_DNA"/>
</dbReference>
<dbReference type="PIR" id="A58656">
    <property type="entry name" value="A58656"/>
</dbReference>
<dbReference type="RefSeq" id="NP_523918.1">
    <property type="nucleotide sequence ID" value="NM_079194.2"/>
</dbReference>
<dbReference type="BioGRID" id="63975">
    <property type="interactions" value="10"/>
</dbReference>
<dbReference type="FunCoup" id="P61855">
    <property type="interactions" value="73"/>
</dbReference>
<dbReference type="IntAct" id="P61855">
    <property type="interactions" value="3"/>
</dbReference>
<dbReference type="STRING" id="7227.FBpp0073069"/>
<dbReference type="PaxDb" id="7227-FBpp0073069"/>
<dbReference type="DNASU" id="38495"/>
<dbReference type="EnsemblMetazoa" id="FBtr0073213">
    <property type="protein sequence ID" value="FBpp0073069"/>
    <property type="gene ID" value="FBgn0004552"/>
</dbReference>
<dbReference type="GeneID" id="38495"/>
<dbReference type="KEGG" id="dme:Dmel_CG1171"/>
<dbReference type="AGR" id="FB:FBgn0004552"/>
<dbReference type="CTD" id="38495"/>
<dbReference type="FlyBase" id="FBgn0004552">
    <property type="gene designation" value="Akh"/>
</dbReference>
<dbReference type="VEuPathDB" id="VectorBase:FBgn0004552"/>
<dbReference type="eggNOG" id="ENOG502T2ES">
    <property type="taxonomic scope" value="Eukaryota"/>
</dbReference>
<dbReference type="HOGENOM" id="CLU_191690_0_0_1"/>
<dbReference type="InParanoid" id="P61855"/>
<dbReference type="OMA" id="DACKTPV"/>
<dbReference type="OrthoDB" id="6159864at2759"/>
<dbReference type="PhylomeDB" id="P61855"/>
<dbReference type="BioGRID-ORCS" id="38495">
    <property type="hits" value="0 hits in 1 CRISPR screen"/>
</dbReference>
<dbReference type="GenomeRNAi" id="38495"/>
<dbReference type="PRO" id="PR:P61855"/>
<dbReference type="Proteomes" id="UP000000803">
    <property type="component" value="Chromosome 3L"/>
</dbReference>
<dbReference type="Bgee" id="FBgn0004552">
    <property type="expression patterns" value="Expressed in digestive system element and 11 other cell types or tissues"/>
</dbReference>
<dbReference type="ExpressionAtlas" id="P61855">
    <property type="expression patterns" value="baseline and differential"/>
</dbReference>
<dbReference type="GO" id="GO:0005615">
    <property type="term" value="C:extracellular space"/>
    <property type="evidence" value="ECO:0000314"/>
    <property type="project" value="FlyBase"/>
</dbReference>
<dbReference type="GO" id="GO:0097005">
    <property type="term" value="F:adipokinetic hormone receptor binding"/>
    <property type="evidence" value="ECO:0000353"/>
    <property type="project" value="FlyBase"/>
</dbReference>
<dbReference type="GO" id="GO:0005184">
    <property type="term" value="F:neuropeptide hormone activity"/>
    <property type="evidence" value="ECO:0000314"/>
    <property type="project" value="FlyBase"/>
</dbReference>
<dbReference type="GO" id="GO:0033500">
    <property type="term" value="P:carbohydrate homeostasis"/>
    <property type="evidence" value="ECO:0000315"/>
    <property type="project" value="FlyBase"/>
</dbReference>
<dbReference type="GO" id="GO:0007186">
    <property type="term" value="P:G protein-coupled receptor signaling pathway"/>
    <property type="evidence" value="ECO:0000314"/>
    <property type="project" value="FlyBase"/>
</dbReference>
<dbReference type="GO" id="GO:0042593">
    <property type="term" value="P:glucose homeostasis"/>
    <property type="evidence" value="ECO:0000315"/>
    <property type="project" value="FlyBase"/>
</dbReference>
<dbReference type="GO" id="GO:0055088">
    <property type="term" value="P:lipid homeostasis"/>
    <property type="evidence" value="ECO:0000315"/>
    <property type="project" value="FlyBase"/>
</dbReference>
<dbReference type="GO" id="GO:0007218">
    <property type="term" value="P:neuropeptide signaling pathway"/>
    <property type="evidence" value="ECO:0000270"/>
    <property type="project" value="FlyBase"/>
</dbReference>
<dbReference type="GO" id="GO:0045819">
    <property type="term" value="P:positive regulation of glycogen catabolic process"/>
    <property type="evidence" value="ECO:0000315"/>
    <property type="project" value="FlyBase"/>
</dbReference>
<dbReference type="GO" id="GO:0032024">
    <property type="term" value="P:positive regulation of insulin secretion"/>
    <property type="evidence" value="ECO:0000315"/>
    <property type="project" value="FlyBase"/>
</dbReference>
<dbReference type="GO" id="GO:0010898">
    <property type="term" value="P:positive regulation of triglyceride catabolic process"/>
    <property type="evidence" value="ECO:0000316"/>
    <property type="project" value="FlyBase"/>
</dbReference>
<dbReference type="GO" id="GO:0009743">
    <property type="term" value="P:response to carbohydrate"/>
    <property type="evidence" value="ECO:0000270"/>
    <property type="project" value="FlyBase"/>
</dbReference>
<dbReference type="GO" id="GO:0042594">
    <property type="term" value="P:response to starvation"/>
    <property type="evidence" value="ECO:0000315"/>
    <property type="project" value="FlyBase"/>
</dbReference>
<dbReference type="InterPro" id="IPR002047">
    <property type="entry name" value="Adipokinetic_hormone_CS"/>
</dbReference>
<dbReference type="InterPro" id="IPR010475">
    <property type="entry name" value="AKH/RPCH_hormone"/>
</dbReference>
<dbReference type="Pfam" id="PF06377">
    <property type="entry name" value="Adipokin_hormo"/>
    <property type="match status" value="1"/>
</dbReference>
<dbReference type="PROSITE" id="PS00256">
    <property type="entry name" value="AKH"/>
    <property type="match status" value="1"/>
</dbReference>
<keyword id="KW-0027">Amidation</keyword>
<keyword id="KW-0165">Cleavage on pair of basic residues</keyword>
<keyword id="KW-0903">Direct protein sequencing</keyword>
<keyword id="KW-0372">Hormone</keyword>
<keyword id="KW-0527">Neuropeptide</keyword>
<keyword id="KW-0873">Pyrrolidone carboxylic acid</keyword>
<keyword id="KW-1185">Reference proteome</keyword>
<keyword id="KW-0964">Secreted</keyword>
<keyword id="KW-0732">Signal</keyword>